<dbReference type="EMBL" id="CU928158">
    <property type="protein sequence ID" value="CAQ88313.1"/>
    <property type="molecule type" value="Genomic_DNA"/>
</dbReference>
<dbReference type="RefSeq" id="WP_000186369.1">
    <property type="nucleotide sequence ID" value="NC_011740.1"/>
</dbReference>
<dbReference type="SMR" id="B7LL85"/>
<dbReference type="KEGG" id="efe:EFER_0777"/>
<dbReference type="HOGENOM" id="CLU_020088_2_0_6"/>
<dbReference type="OrthoDB" id="9787548at2"/>
<dbReference type="Proteomes" id="UP000000745">
    <property type="component" value="Chromosome"/>
</dbReference>
<dbReference type="GO" id="GO:0005886">
    <property type="term" value="C:plasma membrane"/>
    <property type="evidence" value="ECO:0007669"/>
    <property type="project" value="UniProtKB-SubCell"/>
</dbReference>
<dbReference type="GO" id="GO:0015086">
    <property type="term" value="F:cadmium ion transmembrane transporter activity"/>
    <property type="evidence" value="ECO:0007669"/>
    <property type="project" value="TreeGrafter"/>
</dbReference>
<dbReference type="GO" id="GO:0005384">
    <property type="term" value="F:manganese ion transmembrane transporter activity"/>
    <property type="evidence" value="ECO:0007669"/>
    <property type="project" value="TreeGrafter"/>
</dbReference>
<dbReference type="GO" id="GO:0046872">
    <property type="term" value="F:metal ion binding"/>
    <property type="evidence" value="ECO:0007669"/>
    <property type="project" value="UniProtKB-UniRule"/>
</dbReference>
<dbReference type="GO" id="GO:0015293">
    <property type="term" value="F:symporter activity"/>
    <property type="evidence" value="ECO:0007669"/>
    <property type="project" value="UniProtKB-UniRule"/>
</dbReference>
<dbReference type="GO" id="GO:0034755">
    <property type="term" value="P:iron ion transmembrane transport"/>
    <property type="evidence" value="ECO:0007669"/>
    <property type="project" value="TreeGrafter"/>
</dbReference>
<dbReference type="HAMAP" id="MF_00221">
    <property type="entry name" value="NRAMP"/>
    <property type="match status" value="1"/>
</dbReference>
<dbReference type="InterPro" id="IPR001046">
    <property type="entry name" value="NRAMP_fam"/>
</dbReference>
<dbReference type="NCBIfam" id="TIGR01197">
    <property type="entry name" value="nramp"/>
    <property type="match status" value="1"/>
</dbReference>
<dbReference type="NCBIfam" id="NF037982">
    <property type="entry name" value="Nramp_1"/>
    <property type="match status" value="1"/>
</dbReference>
<dbReference type="NCBIfam" id="NF001923">
    <property type="entry name" value="PRK00701.1"/>
    <property type="match status" value="1"/>
</dbReference>
<dbReference type="PANTHER" id="PTHR11706:SF33">
    <property type="entry name" value="NATURAL RESISTANCE-ASSOCIATED MACROPHAGE PROTEIN 2"/>
    <property type="match status" value="1"/>
</dbReference>
<dbReference type="PANTHER" id="PTHR11706">
    <property type="entry name" value="SOLUTE CARRIER PROTEIN FAMILY 11 MEMBER"/>
    <property type="match status" value="1"/>
</dbReference>
<dbReference type="Pfam" id="PF01566">
    <property type="entry name" value="Nramp"/>
    <property type="match status" value="1"/>
</dbReference>
<dbReference type="PRINTS" id="PR00447">
    <property type="entry name" value="NATRESASSCMP"/>
</dbReference>
<protein>
    <recommendedName>
        <fullName evidence="1">Divalent metal cation transporter MntH</fullName>
    </recommendedName>
</protein>
<evidence type="ECO:0000255" key="1">
    <source>
        <dbReference type="HAMAP-Rule" id="MF_00221"/>
    </source>
</evidence>
<accession>B7LL85</accession>
<keyword id="KW-0997">Cell inner membrane</keyword>
<keyword id="KW-1003">Cell membrane</keyword>
<keyword id="KW-0406">Ion transport</keyword>
<keyword id="KW-0472">Membrane</keyword>
<keyword id="KW-0769">Symport</keyword>
<keyword id="KW-0812">Transmembrane</keyword>
<keyword id="KW-1133">Transmembrane helix</keyword>
<keyword id="KW-0813">Transport</keyword>
<proteinExistence type="inferred from homology"/>
<comment type="function">
    <text evidence="1">H(+)-stimulated, divalent metal cation uptake system.</text>
</comment>
<comment type="subcellular location">
    <subcellularLocation>
        <location evidence="1">Cell inner membrane</location>
        <topology evidence="1">Multi-pass membrane protein</topology>
    </subcellularLocation>
</comment>
<comment type="similarity">
    <text evidence="1">Belongs to the NRAMP family.</text>
</comment>
<organism>
    <name type="scientific">Escherichia fergusonii (strain ATCC 35469 / DSM 13698 / CCUG 18766 / IAM 14443 / JCM 21226 / LMG 7866 / NBRC 102419 / NCTC 12128 / CDC 0568-73)</name>
    <dbReference type="NCBI Taxonomy" id="585054"/>
    <lineage>
        <taxon>Bacteria</taxon>
        <taxon>Pseudomonadati</taxon>
        <taxon>Pseudomonadota</taxon>
        <taxon>Gammaproteobacteria</taxon>
        <taxon>Enterobacterales</taxon>
        <taxon>Enterobacteriaceae</taxon>
        <taxon>Escherichia</taxon>
    </lineage>
</organism>
<sequence>MTNYRVESSSGRAARKMRLALMGPAFIAAIGYIDPGNFATNIQAGASFGYQLLWVVVWANLMAMLIQILSAKLGIATGKNLAEQIRDHYPRPVVWFYWVQAEIIAMATDLAEFIGAAIGFKLILGVSLLQGAVLTGIATFLILMLQRRGQKPLEKVIGGLLLFVAAAYIVELIFSQPNLAQLGKGMVIPSLPTSEAVFLAAGVLGATIMPHVIYLHSSLTQHLHGGSRQQRYSATKWDVAIAMTIAGFVNLAMMATAAAAFHFSGHTGVADLDEAYLTLQPLLSHAAATVFGLSLVAAGLSSTVVGTLAGQVVMQGFIRFHIPLWVRRTVTMLPSFIVILMGLDPTRILVMSQVLLSFGIALALVPLLIFTSDSKLMGDLVNSKRVKQTGWVIVVLVVALNIWLLVGTALGL</sequence>
<gene>
    <name evidence="1" type="primary">mntH</name>
    <name type="ordered locus">EFER_0777</name>
</gene>
<reference key="1">
    <citation type="journal article" date="2009" name="PLoS Genet.">
        <title>Organised genome dynamics in the Escherichia coli species results in highly diverse adaptive paths.</title>
        <authorList>
            <person name="Touchon M."/>
            <person name="Hoede C."/>
            <person name="Tenaillon O."/>
            <person name="Barbe V."/>
            <person name="Baeriswyl S."/>
            <person name="Bidet P."/>
            <person name="Bingen E."/>
            <person name="Bonacorsi S."/>
            <person name="Bouchier C."/>
            <person name="Bouvet O."/>
            <person name="Calteau A."/>
            <person name="Chiapello H."/>
            <person name="Clermont O."/>
            <person name="Cruveiller S."/>
            <person name="Danchin A."/>
            <person name="Diard M."/>
            <person name="Dossat C."/>
            <person name="Karoui M.E."/>
            <person name="Frapy E."/>
            <person name="Garry L."/>
            <person name="Ghigo J.M."/>
            <person name="Gilles A.M."/>
            <person name="Johnson J."/>
            <person name="Le Bouguenec C."/>
            <person name="Lescat M."/>
            <person name="Mangenot S."/>
            <person name="Martinez-Jehanne V."/>
            <person name="Matic I."/>
            <person name="Nassif X."/>
            <person name="Oztas S."/>
            <person name="Petit M.A."/>
            <person name="Pichon C."/>
            <person name="Rouy Z."/>
            <person name="Ruf C.S."/>
            <person name="Schneider D."/>
            <person name="Tourret J."/>
            <person name="Vacherie B."/>
            <person name="Vallenet D."/>
            <person name="Medigue C."/>
            <person name="Rocha E.P.C."/>
            <person name="Denamur E."/>
        </authorList>
    </citation>
    <scope>NUCLEOTIDE SEQUENCE [LARGE SCALE GENOMIC DNA]</scope>
    <source>
        <strain>ATCC 35469 / DSM 13698 / BCRC 15582 / CCUG 18766 / IAM 14443 / JCM 21226 / LMG 7866 / NBRC 102419 / NCTC 12128 / CDC 0568-73</strain>
    </source>
</reference>
<name>MNTH_ESCF3</name>
<feature type="chain" id="PRO_1000191752" description="Divalent metal cation transporter MntH">
    <location>
        <begin position="1"/>
        <end position="412"/>
    </location>
</feature>
<feature type="topological domain" description="Cytoplasmic" evidence="1">
    <location>
        <begin position="1"/>
        <end position="19"/>
    </location>
</feature>
<feature type="transmembrane region" description="Helical" evidence="1">
    <location>
        <begin position="20"/>
        <end position="39"/>
    </location>
</feature>
<feature type="topological domain" description="Periplasmic" evidence="1">
    <location>
        <begin position="40"/>
        <end position="51"/>
    </location>
</feature>
<feature type="transmembrane region" description="Helical" evidence="1">
    <location>
        <begin position="52"/>
        <end position="71"/>
    </location>
</feature>
<feature type="topological domain" description="Cytoplasmic" evidence="1">
    <location>
        <begin position="72"/>
        <end position="95"/>
    </location>
</feature>
<feature type="transmembrane region" description="Helical" evidence="1">
    <location>
        <begin position="96"/>
        <end position="118"/>
    </location>
</feature>
<feature type="topological domain" description="Periplasmic" evidence="1">
    <location>
        <begin position="119"/>
        <end position="125"/>
    </location>
</feature>
<feature type="transmembrane region" description="Helical" evidence="1">
    <location>
        <begin position="126"/>
        <end position="145"/>
    </location>
</feature>
<feature type="topological domain" description="Cytoplasmic" evidence="1">
    <location>
        <begin position="146"/>
        <end position="155"/>
    </location>
</feature>
<feature type="transmembrane region" description="Helical" evidence="1">
    <location>
        <begin position="156"/>
        <end position="175"/>
    </location>
</feature>
<feature type="topological domain" description="Periplasmic" evidence="1">
    <location>
        <begin position="176"/>
        <end position="196"/>
    </location>
</feature>
<feature type="transmembrane region" description="Helical" evidence="1">
    <location>
        <begin position="197"/>
        <end position="220"/>
    </location>
</feature>
<feature type="topological domain" description="Cytoplasmic" evidence="1">
    <location>
        <begin position="221"/>
        <end position="238"/>
    </location>
</feature>
<feature type="transmembrane region" description="Helical" evidence="1">
    <location>
        <begin position="239"/>
        <end position="258"/>
    </location>
</feature>
<feature type="topological domain" description="Periplasmic" evidence="1">
    <location>
        <begin position="259"/>
        <end position="276"/>
    </location>
</feature>
<feature type="transmembrane region" description="Helical" evidence="1">
    <location>
        <begin position="277"/>
        <end position="297"/>
    </location>
</feature>
<feature type="topological domain" description="Cytoplasmic" evidence="1">
    <location>
        <begin position="298"/>
        <end position="327"/>
    </location>
</feature>
<feature type="transmembrane region" description="Helical" evidence="1">
    <location>
        <begin position="328"/>
        <end position="344"/>
    </location>
</feature>
<feature type="topological domain" description="Periplasmic" evidence="1">
    <location>
        <begin position="345"/>
        <end position="350"/>
    </location>
</feature>
<feature type="transmembrane region" description="Helical" evidence="1">
    <location>
        <begin position="351"/>
        <end position="370"/>
    </location>
</feature>
<feature type="topological domain" description="Cytoplasmic" evidence="1">
    <location>
        <begin position="371"/>
        <end position="387"/>
    </location>
</feature>
<feature type="transmembrane region" description="Helical" evidence="1">
    <location>
        <begin position="388"/>
        <end position="406"/>
    </location>
</feature>
<feature type="topological domain" description="Periplasmic" evidence="1">
    <location>
        <begin position="407"/>
        <end position="412"/>
    </location>
</feature>